<protein>
    <recommendedName>
        <fullName>Putative Ig-like domain-containing protein ORF10</fullName>
    </recommendedName>
</protein>
<organismHost>
    <name type="scientific">Galliformes</name>
    <dbReference type="NCBI Taxonomy" id="8976"/>
</organismHost>
<evidence type="ECO:0000255" key="1"/>
<organism>
    <name type="scientific">Fowl adenovirus A serotype 1 (strain CELO / Phelps)</name>
    <name type="common">FAdV-1</name>
    <name type="synonym">Avian adenovirus gal1 (strain Phelps)</name>
    <dbReference type="NCBI Taxonomy" id="10553"/>
    <lineage>
        <taxon>Viruses</taxon>
        <taxon>Varidnaviria</taxon>
        <taxon>Bamfordvirae</taxon>
        <taxon>Preplasmiviricota</taxon>
        <taxon>Tectiliviricetes</taxon>
        <taxon>Rowavirales</taxon>
        <taxon>Adenoviridae</taxon>
        <taxon>Aviadenovirus</taxon>
        <taxon>Fowl aviadenovirus A</taxon>
    </lineage>
</organism>
<proteinExistence type="inferred from homology"/>
<sequence>MIDKRNKKAVTHISTCLCHSSIPIYGDSPFLNTHRAAMDPRPLVLLLLLASHISTFRQMYFEGETIHFPMGIYGNETTLYMNDIILEGTRANTTTRTISLTTTKKNAGTNLYTVISETGHNATYLITVQPLGQSIHHAYTWAGNTFTLQGQVFEHGNYTRWVRLENAEPKLIISWALSNRTINKGPAYTANMDFDPGNNTLTLHPVLITDAGIFQCVIDQQTNLTLTINFTVSENPPIVAHLDIHKTISRTIAICSCLLIAVIAVLCCLRQLNVNGRGNSEMI</sequence>
<dbReference type="EMBL" id="X17217">
    <property type="protein sequence ID" value="CAA35087.1"/>
    <property type="molecule type" value="Genomic_DNA"/>
</dbReference>
<dbReference type="EMBL" id="U46933">
    <property type="protein sequence ID" value="AAC54931.1"/>
    <property type="molecule type" value="Genomic_DNA"/>
</dbReference>
<dbReference type="PIR" id="S10005">
    <property type="entry name" value="S10005"/>
</dbReference>
<dbReference type="RefSeq" id="NP_043905.1">
    <property type="nucleotide sequence ID" value="NC_001720.1"/>
</dbReference>
<dbReference type="KEGG" id="vg:1733478"/>
<dbReference type="Proteomes" id="UP000001594">
    <property type="component" value="Segment"/>
</dbReference>
<dbReference type="CDD" id="cd00096">
    <property type="entry name" value="Ig"/>
    <property type="match status" value="1"/>
</dbReference>
<dbReference type="Gene3D" id="2.60.40.10">
    <property type="entry name" value="Immunoglobulins"/>
    <property type="match status" value="1"/>
</dbReference>
<dbReference type="InterPro" id="IPR007110">
    <property type="entry name" value="Ig-like_dom"/>
</dbReference>
<dbReference type="InterPro" id="IPR036179">
    <property type="entry name" value="Ig-like_dom_sf"/>
</dbReference>
<dbReference type="InterPro" id="IPR013783">
    <property type="entry name" value="Ig-like_fold"/>
</dbReference>
<dbReference type="SUPFAM" id="SSF48726">
    <property type="entry name" value="Immunoglobulin"/>
    <property type="match status" value="1"/>
</dbReference>
<dbReference type="PROSITE" id="PS50835">
    <property type="entry name" value="IG_LIKE"/>
    <property type="match status" value="1"/>
</dbReference>
<gene>
    <name type="ORF">10</name>
</gene>
<keyword id="KW-0325">Glycoprotein</keyword>
<keyword id="KW-0393">Immunoglobulin domain</keyword>
<keyword id="KW-1185">Reference proteome</keyword>
<keyword id="KW-0732">Signal</keyword>
<name>YO10_ADEG1</name>
<feature type="signal peptide" evidence="1">
    <location>
        <begin position="1"/>
        <end position="55"/>
    </location>
</feature>
<feature type="chain" id="PRO_0000015166" description="Putative Ig-like domain-containing protein ORF10">
    <location>
        <begin position="56"/>
        <end position="283"/>
    </location>
</feature>
<feature type="domain" description="Ig-like">
    <location>
        <begin position="129"/>
        <end position="227"/>
    </location>
</feature>
<feature type="glycosylation site" description="N-linked (GlcNAc...) asparagine; by host" evidence="1">
    <location>
        <position position="75"/>
    </location>
</feature>
<feature type="glycosylation site" description="N-linked (GlcNAc...) asparagine; by host" evidence="1">
    <location>
        <position position="92"/>
    </location>
</feature>
<feature type="glycosylation site" description="N-linked (GlcNAc...) asparagine; by host" evidence="1">
    <location>
        <position position="121"/>
    </location>
</feature>
<feature type="glycosylation site" description="N-linked (GlcNAc...) asparagine; by host" evidence="1">
    <location>
        <position position="157"/>
    </location>
</feature>
<feature type="glycosylation site" description="N-linked (GlcNAc...) asparagine; by host" evidence="1">
    <location>
        <position position="179"/>
    </location>
</feature>
<feature type="glycosylation site" description="N-linked (GlcNAc...) asparagine; by host" evidence="1">
    <location>
        <position position="198"/>
    </location>
</feature>
<feature type="glycosylation site" description="N-linked (GlcNAc...) asparagine; by host" evidence="1">
    <location>
        <position position="223"/>
    </location>
</feature>
<feature type="glycosylation site" description="N-linked (GlcNAc...) asparagine; by host" evidence="1">
    <location>
        <position position="229"/>
    </location>
</feature>
<accession>P20747</accession>
<reference key="1">
    <citation type="journal article" date="1990" name="Nucleic Acids Res.">
        <title>Sequence of an avian adenovirus (CELO) DNA fragment (0-11.2%).</title>
        <authorList>
            <person name="Akopian T.A."/>
            <person name="Kruglyak V.A."/>
            <person name="Rivkina M.B."/>
            <person name="Naroditsky B.S."/>
            <person name="Tikhonenko T.I."/>
        </authorList>
    </citation>
    <scope>NUCLEOTIDE SEQUENCE [GENOMIC DNA]</scope>
</reference>
<reference key="2">
    <citation type="journal article" date="1996" name="J. Virol.">
        <title>The complete DNA sequence and genomic organization of the avian adenovirus CELO.</title>
        <authorList>
            <person name="Chiocca S."/>
            <person name="Kurzbauer R."/>
            <person name="Schaffner G."/>
            <person name="Baker A."/>
            <person name="Mautner V."/>
            <person name="Cotten M."/>
        </authorList>
    </citation>
    <scope>NUCLEOTIDE SEQUENCE [LARGE SCALE GENOMIC DNA]</scope>
</reference>